<protein>
    <recommendedName>
        <fullName>ISWI one complex protein 4</fullName>
    </recommendedName>
</protein>
<reference key="1">
    <citation type="journal article" date="1997" name="Nature">
        <title>The nucleotide sequence of Saccharomyces cerevisiae chromosome XIII.</title>
        <authorList>
            <person name="Bowman S."/>
            <person name="Churcher C.M."/>
            <person name="Badcock K."/>
            <person name="Brown D."/>
            <person name="Chillingworth T."/>
            <person name="Connor R."/>
            <person name="Dedman K."/>
            <person name="Devlin K."/>
            <person name="Gentles S."/>
            <person name="Hamlin N."/>
            <person name="Hunt S."/>
            <person name="Jagels K."/>
            <person name="Lye G."/>
            <person name="Moule S."/>
            <person name="Odell C."/>
            <person name="Pearson D."/>
            <person name="Rajandream M.A."/>
            <person name="Rice P."/>
            <person name="Skelton J."/>
            <person name="Walsh S.V."/>
            <person name="Whitehead S."/>
            <person name="Barrell B.G."/>
        </authorList>
    </citation>
    <scope>NUCLEOTIDE SEQUENCE [LARGE SCALE GENOMIC DNA]</scope>
    <source>
        <strain>ATCC 204508 / S288c</strain>
    </source>
</reference>
<reference key="2">
    <citation type="journal article" date="2014" name="G3 (Bethesda)">
        <title>The reference genome sequence of Saccharomyces cerevisiae: Then and now.</title>
        <authorList>
            <person name="Engel S.R."/>
            <person name="Dietrich F.S."/>
            <person name="Fisk D.G."/>
            <person name="Binkley G."/>
            <person name="Balakrishnan R."/>
            <person name="Costanzo M.C."/>
            <person name="Dwight S.S."/>
            <person name="Hitz B.C."/>
            <person name="Karra K."/>
            <person name="Nash R.S."/>
            <person name="Weng S."/>
            <person name="Wong E.D."/>
            <person name="Lloyd P."/>
            <person name="Skrzypek M.S."/>
            <person name="Miyasato S.R."/>
            <person name="Simison M."/>
            <person name="Cherry J.M."/>
        </authorList>
    </citation>
    <scope>GENOME REANNOTATION</scope>
    <source>
        <strain>ATCC 204508 / S288c</strain>
    </source>
</reference>
<reference key="3">
    <citation type="journal article" date="2003" name="Cell">
        <title>Isw1 chromatin remodeling ATPase coordinates transcription elongation and termination by RNA polymerase II.</title>
        <authorList>
            <person name="Morillon A."/>
            <person name="Karabetsou N."/>
            <person name="O'Sullivan J."/>
            <person name="Kent N."/>
            <person name="Proudfoot N."/>
            <person name="Mellor J."/>
        </authorList>
    </citation>
    <scope>FUNCTION OF THE ISW1B COMPLEX</scope>
</reference>
<reference key="4">
    <citation type="journal article" date="2003" name="Nature">
        <title>Global analysis of protein localization in budding yeast.</title>
        <authorList>
            <person name="Huh W.-K."/>
            <person name="Falvo J.V."/>
            <person name="Gerke L.C."/>
            <person name="Carroll A.S."/>
            <person name="Howson R.W."/>
            <person name="Weissman J.S."/>
            <person name="O'Shea E.K."/>
        </authorList>
    </citation>
    <scope>SUBCELLULAR LOCATION [LARGE SCALE ANALYSIS]</scope>
</reference>
<reference key="5">
    <citation type="journal article" date="2003" name="Nature">
        <title>Global analysis of protein expression in yeast.</title>
        <authorList>
            <person name="Ghaemmaghami S."/>
            <person name="Huh W.-K."/>
            <person name="Bower K."/>
            <person name="Howson R.W."/>
            <person name="Belle A."/>
            <person name="Dephoure N."/>
            <person name="O'Shea E.K."/>
            <person name="Weissman J.S."/>
        </authorList>
    </citation>
    <scope>LEVEL OF PROTEIN EXPRESSION [LARGE SCALE ANALYSIS]</scope>
</reference>
<reference key="6">
    <citation type="journal article" date="2003" name="Mol. Cell. Biol.">
        <title>Yeast Isw1p forms two separable complexes in vivo.</title>
        <authorList>
            <person name="Vary J.C. Jr."/>
            <person name="Gangaraju V.K."/>
            <person name="Qin J."/>
            <person name="Landel C.C."/>
            <person name="Kooperberg C."/>
            <person name="Bartholomew B."/>
            <person name="Tsukiyama T."/>
        </authorList>
    </citation>
    <scope>IDENTIFICATION IN THE ISW1B COMPLEX</scope>
    <scope>FUNCTION OF THE ISW1B COMPLEX</scope>
</reference>
<reference key="7">
    <citation type="journal article" date="2007" name="J. Proteome Res.">
        <title>Large-scale phosphorylation analysis of alpha-factor-arrested Saccharomyces cerevisiae.</title>
        <authorList>
            <person name="Li X."/>
            <person name="Gerber S.A."/>
            <person name="Rudner A.D."/>
            <person name="Beausoleil S.A."/>
            <person name="Haas W."/>
            <person name="Villen J."/>
            <person name="Elias J.E."/>
            <person name="Gygi S.P."/>
        </authorList>
    </citation>
    <scope>PHOSPHORYLATION [LARGE SCALE ANALYSIS] AT SER-73 AND SER-242</scope>
    <scope>IDENTIFICATION BY MASS SPECTROMETRY [LARGE SCALE ANALYSIS]</scope>
    <source>
        <strain>ADR376</strain>
    </source>
</reference>
<reference key="8">
    <citation type="journal article" date="2008" name="Mol. Cell. Proteomics">
        <title>A multidimensional chromatography technology for in-depth phosphoproteome analysis.</title>
        <authorList>
            <person name="Albuquerque C.P."/>
            <person name="Smolka M.B."/>
            <person name="Payne S.H."/>
            <person name="Bafna V."/>
            <person name="Eng J."/>
            <person name="Zhou H."/>
        </authorList>
    </citation>
    <scope>PHOSPHORYLATION [LARGE SCALE ANALYSIS] AT SER-2; THR-9; SER-65; SER-73 AND SER-242</scope>
    <scope>IDENTIFICATION BY MASS SPECTROMETRY [LARGE SCALE ANALYSIS]</scope>
</reference>
<reference key="9">
    <citation type="journal article" date="2009" name="Science">
        <title>Global analysis of Cdk1 substrate phosphorylation sites provides insights into evolution.</title>
        <authorList>
            <person name="Holt L.J."/>
            <person name="Tuch B.B."/>
            <person name="Villen J."/>
            <person name="Johnson A.D."/>
            <person name="Gygi S.P."/>
            <person name="Morgan D.O."/>
        </authorList>
    </citation>
    <scope>PHOSPHORYLATION [LARGE SCALE ANALYSIS] AT SER-73 AND SER-242</scope>
    <scope>IDENTIFICATION BY MASS SPECTROMETRY [LARGE SCALE ANALYSIS]</scope>
</reference>
<proteinExistence type="evidence at protein level"/>
<name>IOC4_YEAST</name>
<accession>Q04213</accession>
<accession>D6VZL9</accession>
<gene>
    <name type="primary">IOC4</name>
    <name type="ordered locus">YMR044W</name>
    <name type="ORF">YM9532.09</name>
</gene>
<dbReference type="EMBL" id="Z48502">
    <property type="protein sequence ID" value="CAA88410.1"/>
    <property type="molecule type" value="Genomic_DNA"/>
</dbReference>
<dbReference type="EMBL" id="BK006946">
    <property type="protein sequence ID" value="DAA09943.1"/>
    <property type="molecule type" value="Genomic_DNA"/>
</dbReference>
<dbReference type="PIR" id="S52893">
    <property type="entry name" value="S52893"/>
</dbReference>
<dbReference type="RefSeq" id="NP_013758.1">
    <property type="nucleotide sequence ID" value="NM_001182541.1"/>
</dbReference>
<dbReference type="PDB" id="7E29">
    <property type="method" value="X-ray"/>
    <property type="resolution" value="2.30 A"/>
    <property type="chains" value="A=1-178"/>
</dbReference>
<dbReference type="PDBsum" id="7E29"/>
<dbReference type="SMR" id="Q04213"/>
<dbReference type="BioGRID" id="35217">
    <property type="interactions" value="204"/>
</dbReference>
<dbReference type="ComplexPortal" id="CPX-636">
    <property type="entry name" value="ISW1b chromatin remodeling complex"/>
</dbReference>
<dbReference type="DIP" id="DIP-876N"/>
<dbReference type="FunCoup" id="Q04213">
    <property type="interactions" value="176"/>
</dbReference>
<dbReference type="IntAct" id="Q04213">
    <property type="interactions" value="25"/>
</dbReference>
<dbReference type="MINT" id="Q04213"/>
<dbReference type="STRING" id="4932.YMR044W"/>
<dbReference type="iPTMnet" id="Q04213"/>
<dbReference type="PaxDb" id="4932-YMR044W"/>
<dbReference type="PeptideAtlas" id="Q04213"/>
<dbReference type="EnsemblFungi" id="YMR044W_mRNA">
    <property type="protein sequence ID" value="YMR044W"/>
    <property type="gene ID" value="YMR044W"/>
</dbReference>
<dbReference type="GeneID" id="855061"/>
<dbReference type="KEGG" id="sce:YMR044W"/>
<dbReference type="AGR" id="SGD:S000004647"/>
<dbReference type="SGD" id="S000004647">
    <property type="gene designation" value="IOC4"/>
</dbReference>
<dbReference type="VEuPathDB" id="FungiDB:YMR044W"/>
<dbReference type="eggNOG" id="ENOG502QTTV">
    <property type="taxonomic scope" value="Eukaryota"/>
</dbReference>
<dbReference type="HOGENOM" id="CLU_031574_0_0_1"/>
<dbReference type="InParanoid" id="Q04213"/>
<dbReference type="OMA" id="WPAMIIP"/>
<dbReference type="OrthoDB" id="62853at2759"/>
<dbReference type="BioCyc" id="YEAST:G3O-32749-MONOMER"/>
<dbReference type="BioGRID-ORCS" id="855061">
    <property type="hits" value="4 hits in 10 CRISPR screens"/>
</dbReference>
<dbReference type="PRO" id="PR:Q04213"/>
<dbReference type="Proteomes" id="UP000002311">
    <property type="component" value="Chromosome XIII"/>
</dbReference>
<dbReference type="RNAct" id="Q04213">
    <property type="molecule type" value="protein"/>
</dbReference>
<dbReference type="GO" id="GO:0016587">
    <property type="term" value="C:Isw1 complex"/>
    <property type="evidence" value="ECO:0000353"/>
    <property type="project" value="ComplexPortal"/>
</dbReference>
<dbReference type="GO" id="GO:0036437">
    <property type="term" value="C:Isw1b complex"/>
    <property type="evidence" value="ECO:0000314"/>
    <property type="project" value="SGD"/>
</dbReference>
<dbReference type="GO" id="GO:0006338">
    <property type="term" value="P:chromatin remodeling"/>
    <property type="evidence" value="ECO:0000314"/>
    <property type="project" value="ComplexPortal"/>
</dbReference>
<dbReference type="GO" id="GO:0006355">
    <property type="term" value="P:regulation of DNA-templated transcription"/>
    <property type="evidence" value="ECO:0000303"/>
    <property type="project" value="ComplexPortal"/>
</dbReference>
<dbReference type="GO" id="GO:0009408">
    <property type="term" value="P:response to heat"/>
    <property type="evidence" value="ECO:0000303"/>
    <property type="project" value="ComplexPortal"/>
</dbReference>
<dbReference type="GO" id="GO:0007062">
    <property type="term" value="P:sister chromatid cohesion"/>
    <property type="evidence" value="ECO:0000315"/>
    <property type="project" value="SGD"/>
</dbReference>
<dbReference type="CDD" id="cd05840">
    <property type="entry name" value="PWWP_ScIOC4-like"/>
    <property type="match status" value="1"/>
</dbReference>
<dbReference type="Gene3D" id="2.30.30.140">
    <property type="match status" value="1"/>
</dbReference>
<dbReference type="InterPro" id="IPR035503">
    <property type="entry name" value="IOC4-like_PWWP"/>
</dbReference>
<dbReference type="InterPro" id="IPR000313">
    <property type="entry name" value="PWWP_dom"/>
</dbReference>
<dbReference type="Pfam" id="PF00855">
    <property type="entry name" value="PWWP"/>
    <property type="match status" value="1"/>
</dbReference>
<dbReference type="SMART" id="SM00293">
    <property type="entry name" value="PWWP"/>
    <property type="match status" value="1"/>
</dbReference>
<dbReference type="SUPFAM" id="SSF63748">
    <property type="entry name" value="Tudor/PWWP/MBT"/>
    <property type="match status" value="1"/>
</dbReference>
<sequence length="475" mass="55427">MSEAIFQPTDIVLAKVKGFSAWPAMIIPNELIPDNILKTKPVSVHKGKSGSDKKANEDIDADMESEARDREQSEEEEDIEDFGESEANPEKFIIYTPVLKFRKNDTLKSTYCVKFFCDDSYIWVKPMDMKILTSEDCRKWLSGKQRKNKKLIPAYEMAMRGKNGIDIWEFVEYGSYGKPDEEEYVEEEEEENEPEKKAIRPTRSSSRQRQKRASETEKSEGGNSNKRKRVTRSTRQQAIDASEEEEEEEEEKVQEAVRKRPQRTKTKKVVVSKTKPNPKTKAKKEKPKPPKPIKYHFEDDEDWSIVGLGPQDLSIEKTMDPIAKKLSQKKNLEKHVEIKLDLEDKLAGINKLLCDVLCSAINQAVSIKDDFEIILDELQIALDTRGSRNEFITIFQSNNSLLLNFRILFNLRKRELNKWDLWDRFQDIFKHIYSYQFIPDTEDWQLEQNMEIEEMDREKPSFSEDVKEEESKVGA</sequence>
<organism>
    <name type="scientific">Saccharomyces cerevisiae (strain ATCC 204508 / S288c)</name>
    <name type="common">Baker's yeast</name>
    <dbReference type="NCBI Taxonomy" id="559292"/>
    <lineage>
        <taxon>Eukaryota</taxon>
        <taxon>Fungi</taxon>
        <taxon>Dikarya</taxon>
        <taxon>Ascomycota</taxon>
        <taxon>Saccharomycotina</taxon>
        <taxon>Saccharomycetes</taxon>
        <taxon>Saccharomycetales</taxon>
        <taxon>Saccharomycetaceae</taxon>
        <taxon>Saccharomyces</taxon>
    </lineage>
</organism>
<feature type="chain" id="PRO_0000203276" description="ISWI one complex protein 4">
    <location>
        <begin position="1"/>
        <end position="475"/>
    </location>
</feature>
<feature type="region of interest" description="Disordered" evidence="1">
    <location>
        <begin position="42"/>
        <end position="84"/>
    </location>
</feature>
<feature type="region of interest" description="Disordered" evidence="1">
    <location>
        <begin position="181"/>
        <end position="296"/>
    </location>
</feature>
<feature type="region of interest" description="Disordered" evidence="1">
    <location>
        <begin position="454"/>
        <end position="475"/>
    </location>
</feature>
<feature type="compositionally biased region" description="Acidic residues" evidence="1">
    <location>
        <begin position="72"/>
        <end position="84"/>
    </location>
</feature>
<feature type="compositionally biased region" description="Acidic residues" evidence="1">
    <location>
        <begin position="181"/>
        <end position="193"/>
    </location>
</feature>
<feature type="compositionally biased region" description="Acidic residues" evidence="1">
    <location>
        <begin position="241"/>
        <end position="252"/>
    </location>
</feature>
<feature type="compositionally biased region" description="Basic residues" evidence="1">
    <location>
        <begin position="259"/>
        <end position="294"/>
    </location>
</feature>
<feature type="compositionally biased region" description="Basic and acidic residues" evidence="1">
    <location>
        <begin position="456"/>
        <end position="475"/>
    </location>
</feature>
<feature type="modified residue" description="Phosphoserine" evidence="7">
    <location>
        <position position="2"/>
    </location>
</feature>
<feature type="modified residue" description="Phosphothreonine" evidence="7">
    <location>
        <position position="9"/>
    </location>
</feature>
<feature type="modified residue" description="Phosphoserine" evidence="7">
    <location>
        <position position="65"/>
    </location>
</feature>
<feature type="modified residue" description="Phosphoserine" evidence="6 7 8">
    <location>
        <position position="73"/>
    </location>
</feature>
<feature type="modified residue" description="Phosphoserine" evidence="6 7 8">
    <location>
        <position position="242"/>
    </location>
</feature>
<feature type="strand" evidence="9">
    <location>
        <begin position="11"/>
        <end position="15"/>
    </location>
</feature>
<feature type="strand" evidence="9">
    <location>
        <begin position="21"/>
        <end position="26"/>
    </location>
</feature>
<feature type="turn" evidence="9">
    <location>
        <begin position="29"/>
        <end position="31"/>
    </location>
</feature>
<feature type="helix" evidence="9">
    <location>
        <begin position="34"/>
        <end position="37"/>
    </location>
</feature>
<feature type="strand" evidence="9">
    <location>
        <begin position="93"/>
        <end position="98"/>
    </location>
</feature>
<feature type="strand" evidence="9">
    <location>
        <begin position="111"/>
        <end position="115"/>
    </location>
</feature>
<feature type="turn" evidence="9">
    <location>
        <begin position="116"/>
        <end position="118"/>
    </location>
</feature>
<feature type="strand" evidence="9">
    <location>
        <begin position="121"/>
        <end position="124"/>
    </location>
</feature>
<feature type="helix" evidence="9">
    <location>
        <begin position="126"/>
        <end position="128"/>
    </location>
</feature>
<feature type="strand" evidence="9">
    <location>
        <begin position="129"/>
        <end position="131"/>
    </location>
</feature>
<feature type="helix" evidence="9">
    <location>
        <begin position="134"/>
        <end position="142"/>
    </location>
</feature>
<feature type="helix" evidence="9">
    <location>
        <begin position="144"/>
        <end position="147"/>
    </location>
</feature>
<feature type="helix" evidence="9">
    <location>
        <begin position="149"/>
        <end position="151"/>
    </location>
</feature>
<feature type="helix" evidence="9">
    <location>
        <begin position="152"/>
        <end position="158"/>
    </location>
</feature>
<feature type="turn" evidence="9">
    <location>
        <begin position="159"/>
        <end position="164"/>
    </location>
</feature>
<feature type="helix" evidence="9">
    <location>
        <begin position="167"/>
        <end position="173"/>
    </location>
</feature>
<comment type="function">
    <text evidence="2 5">Functions as a component of the ISW1B complex, which acts in remodeling the chromatin by catalyzing an ATP-dependent alteration in the structure of nucleosomal DNA. The ISW1B complex acts within coding regions to control the amount of RNA polymerase II released into productive elongation and to coordinate elongation with termination and pre-mRNA processing.</text>
</comment>
<comment type="subunit">
    <text evidence="2">Component of the ISW1B complex, which at least consists of ISW1, IOC2 and IOC4.</text>
</comment>
<comment type="subcellular location">
    <subcellularLocation>
        <location evidence="3">Nucleus</location>
    </subcellularLocation>
</comment>
<comment type="miscellaneous">
    <text evidence="4">Present with 5820 molecules/cell in log phase SD medium.</text>
</comment>
<keyword id="KW-0002">3D-structure</keyword>
<keyword id="KW-0539">Nucleus</keyword>
<keyword id="KW-0597">Phosphoprotein</keyword>
<keyword id="KW-1185">Reference proteome</keyword>
<keyword id="KW-0804">Transcription</keyword>
<keyword id="KW-0805">Transcription regulation</keyword>
<evidence type="ECO:0000256" key="1">
    <source>
        <dbReference type="SAM" id="MobiDB-lite"/>
    </source>
</evidence>
<evidence type="ECO:0000269" key="2">
    <source>
    </source>
</evidence>
<evidence type="ECO:0000269" key="3">
    <source>
    </source>
</evidence>
<evidence type="ECO:0000269" key="4">
    <source>
    </source>
</evidence>
<evidence type="ECO:0000269" key="5">
    <source>
    </source>
</evidence>
<evidence type="ECO:0007744" key="6">
    <source>
    </source>
</evidence>
<evidence type="ECO:0007744" key="7">
    <source>
    </source>
</evidence>
<evidence type="ECO:0007744" key="8">
    <source>
    </source>
</evidence>
<evidence type="ECO:0007829" key="9">
    <source>
        <dbReference type="PDB" id="7E29"/>
    </source>
</evidence>